<gene>
    <name type="ordered locus">MG385</name>
</gene>
<evidence type="ECO:0000305" key="1"/>
<dbReference type="EMBL" id="L43967">
    <property type="protein sequence ID" value="AAC71612.1"/>
    <property type="molecule type" value="Genomic_DNA"/>
</dbReference>
<dbReference type="EMBL" id="U02112">
    <property type="protein sequence ID" value="AAD12385.1"/>
    <property type="molecule type" value="Genomic_DNA"/>
</dbReference>
<dbReference type="EMBL" id="U02246">
    <property type="protein sequence ID" value="AAA03402.1"/>
    <property type="molecule type" value="Genomic_DNA"/>
</dbReference>
<dbReference type="PIR" id="F64242">
    <property type="entry name" value="F64242"/>
</dbReference>
<dbReference type="RefSeq" id="WP_009885949.1">
    <property type="nucleotide sequence ID" value="NC_000908.2"/>
</dbReference>
<dbReference type="SMR" id="P47625"/>
<dbReference type="FunCoup" id="P47625">
    <property type="interactions" value="91"/>
</dbReference>
<dbReference type="STRING" id="243273.MG_385"/>
<dbReference type="GeneID" id="88282570"/>
<dbReference type="KEGG" id="mge:MG_385"/>
<dbReference type="eggNOG" id="COG0584">
    <property type="taxonomic scope" value="Bacteria"/>
</dbReference>
<dbReference type="HOGENOM" id="CLU_030006_3_3_14"/>
<dbReference type="InParanoid" id="P47625"/>
<dbReference type="OrthoDB" id="384721at2"/>
<dbReference type="BioCyc" id="MGEN243273:G1GJ2-481-MONOMER"/>
<dbReference type="Proteomes" id="UP000000807">
    <property type="component" value="Chromosome"/>
</dbReference>
<dbReference type="GO" id="GO:0008081">
    <property type="term" value="F:phosphoric diester hydrolase activity"/>
    <property type="evidence" value="ECO:0007669"/>
    <property type="project" value="InterPro"/>
</dbReference>
<dbReference type="GO" id="GO:0006629">
    <property type="term" value="P:lipid metabolic process"/>
    <property type="evidence" value="ECO:0007669"/>
    <property type="project" value="InterPro"/>
</dbReference>
<dbReference type="Gene3D" id="3.20.20.190">
    <property type="entry name" value="Phosphatidylinositol (PI) phosphodiesterase"/>
    <property type="match status" value="1"/>
</dbReference>
<dbReference type="InterPro" id="IPR030395">
    <property type="entry name" value="GP_PDE_dom"/>
</dbReference>
<dbReference type="InterPro" id="IPR017946">
    <property type="entry name" value="PLC-like_Pdiesterase_TIM-brl"/>
</dbReference>
<dbReference type="PANTHER" id="PTHR46211:SF1">
    <property type="entry name" value="GLYCEROPHOSPHODIESTER PHOSPHODIESTERASE, CYTOPLASMIC"/>
    <property type="match status" value="1"/>
</dbReference>
<dbReference type="PANTHER" id="PTHR46211">
    <property type="entry name" value="GLYCEROPHOSPHORYL DIESTER PHOSPHODIESTERASE"/>
    <property type="match status" value="1"/>
</dbReference>
<dbReference type="Pfam" id="PF03009">
    <property type="entry name" value="GDPD"/>
    <property type="match status" value="1"/>
</dbReference>
<dbReference type="SUPFAM" id="SSF51695">
    <property type="entry name" value="PLC-like phosphodiesterases"/>
    <property type="match status" value="1"/>
</dbReference>
<dbReference type="PROSITE" id="PS51704">
    <property type="entry name" value="GP_PDE"/>
    <property type="match status" value="1"/>
</dbReference>
<reference key="1">
    <citation type="journal article" date="1995" name="Science">
        <title>The minimal gene complement of Mycoplasma genitalium.</title>
        <authorList>
            <person name="Fraser C.M."/>
            <person name="Gocayne J.D."/>
            <person name="White O."/>
            <person name="Adams M.D."/>
            <person name="Clayton R.A."/>
            <person name="Fleischmann R.D."/>
            <person name="Bult C.J."/>
            <person name="Kerlavage A.R."/>
            <person name="Sutton G.G."/>
            <person name="Kelley J.M."/>
            <person name="Fritchman J.L."/>
            <person name="Weidman J.F."/>
            <person name="Small K.V."/>
            <person name="Sandusky M."/>
            <person name="Fuhrmann J.L."/>
            <person name="Nguyen D.T."/>
            <person name="Utterback T.R."/>
            <person name="Saudek D.M."/>
            <person name="Phillips C.A."/>
            <person name="Merrick J.M."/>
            <person name="Tomb J.-F."/>
            <person name="Dougherty B.A."/>
            <person name="Bott K.F."/>
            <person name="Hu P.-C."/>
            <person name="Lucier T.S."/>
            <person name="Peterson S.N."/>
            <person name="Smith H.O."/>
            <person name="Hutchison C.A. III"/>
            <person name="Venter J.C."/>
        </authorList>
    </citation>
    <scope>NUCLEOTIDE SEQUENCE [LARGE SCALE GENOMIC DNA]</scope>
    <source>
        <strain>ATCC 33530 / DSM 19775 / NCTC 10195 / G37</strain>
    </source>
</reference>
<reference key="2">
    <citation type="journal article" date="1993" name="J. Bacteriol.">
        <title>A survey of the Mycoplasma genitalium genome by using random sequencing.</title>
        <authorList>
            <person name="Peterson S.N."/>
            <person name="Hu P.-C."/>
            <person name="Bott K.F."/>
            <person name="Hutchison C.A. III"/>
        </authorList>
    </citation>
    <scope>NUCLEOTIDE SEQUENCE [GENOMIC DNA] OF 3-78 AND 87-176</scope>
    <source>
        <strain>ATCC 33530 / DSM 19775 / NCTC 10195 / G37</strain>
    </source>
</reference>
<accession>P47625</accession>
<accession>Q49354</accession>
<feature type="chain" id="PRO_0000210586" description="Uncharacterized protein MG385">
    <location>
        <begin position="1"/>
        <end position="236"/>
    </location>
</feature>
<feature type="domain" description="GP-PDE">
    <location>
        <begin position="4"/>
        <end position="236"/>
    </location>
</feature>
<feature type="sequence conflict" description="In Ref. 2." evidence="1" ref="2">
    <original>S</original>
    <variation>M</variation>
    <location>
        <position position="87"/>
    </location>
</feature>
<name>Y385_MYCGE</name>
<proteinExistence type="predicted"/>
<sequence length="236" mass="27734">MRKQFLIAYRGYSSIAPENTKLAFQAAQVFDFDGIWIDIQLTKDKQIVVTHKENFKVSNKNLNLNQINLVDLKKVNLASEFKLKVTSQQIQTLKEVLTQFIQPFKYLLIHIKDDKENNNSLLEQLNLLCKDFVLAKEKMILLSSNFHIIKLINETFKGFKTGFVIANKKALLVASRDELMRYCRFLVPNESFYHKNCKEIQNLGLPVILWVIKGLLRYQFYENDRFVKFQITAQIY</sequence>
<organism>
    <name type="scientific">Mycoplasma genitalium (strain ATCC 33530 / DSM 19775 / NCTC 10195 / G37)</name>
    <name type="common">Mycoplasmoides genitalium</name>
    <dbReference type="NCBI Taxonomy" id="243273"/>
    <lineage>
        <taxon>Bacteria</taxon>
        <taxon>Bacillati</taxon>
        <taxon>Mycoplasmatota</taxon>
        <taxon>Mycoplasmoidales</taxon>
        <taxon>Mycoplasmoidaceae</taxon>
        <taxon>Mycoplasmoides</taxon>
    </lineage>
</organism>
<keyword id="KW-0378">Hydrolase</keyword>
<keyword id="KW-1185">Reference proteome</keyword>
<comment type="similarity">
    <text evidence="1">To glycerophosphoryl diester phosphodiesterases (EC 3.1.4.46).</text>
</comment>
<comment type="similarity">
    <text evidence="1">To M.genitalium MG293.</text>
</comment>
<protein>
    <recommendedName>
        <fullName>Uncharacterized protein MG385</fullName>
    </recommendedName>
</protein>